<protein>
    <recommendedName>
        <fullName evidence="1">Glutamyl-tRNA reductase</fullName>
        <shortName evidence="1">GluTR</shortName>
        <ecNumber evidence="1">1.2.1.70</ecNumber>
    </recommendedName>
</protein>
<proteinExistence type="inferred from homology"/>
<gene>
    <name evidence="1" type="primary">hemA</name>
    <name type="ordered locus">BCG9842_B0650</name>
</gene>
<reference key="1">
    <citation type="submission" date="2008-10" db="EMBL/GenBank/DDBJ databases">
        <title>Genome sequence of Bacillus cereus G9842.</title>
        <authorList>
            <person name="Dodson R.J."/>
            <person name="Durkin A.S."/>
            <person name="Rosovitz M.J."/>
            <person name="Rasko D.A."/>
            <person name="Hoffmaster A."/>
            <person name="Ravel J."/>
            <person name="Sutton G."/>
        </authorList>
    </citation>
    <scope>NUCLEOTIDE SEQUENCE [LARGE SCALE GENOMIC DNA]</scope>
    <source>
        <strain>G9842</strain>
    </source>
</reference>
<feature type="chain" id="PRO_1000190507" description="Glutamyl-tRNA reductase">
    <location>
        <begin position="1"/>
        <end position="444"/>
    </location>
</feature>
<feature type="active site" description="Nucleophile" evidence="1">
    <location>
        <position position="50"/>
    </location>
</feature>
<feature type="binding site" evidence="1">
    <location>
        <begin position="49"/>
        <end position="52"/>
    </location>
    <ligand>
        <name>substrate</name>
    </ligand>
</feature>
<feature type="binding site" evidence="1">
    <location>
        <position position="109"/>
    </location>
    <ligand>
        <name>substrate</name>
    </ligand>
</feature>
<feature type="binding site" evidence="1">
    <location>
        <begin position="114"/>
        <end position="116"/>
    </location>
    <ligand>
        <name>substrate</name>
    </ligand>
</feature>
<feature type="binding site" evidence="1">
    <location>
        <position position="120"/>
    </location>
    <ligand>
        <name>substrate</name>
    </ligand>
</feature>
<feature type="binding site" evidence="1">
    <location>
        <begin position="189"/>
        <end position="194"/>
    </location>
    <ligand>
        <name>NADP(+)</name>
        <dbReference type="ChEBI" id="CHEBI:58349"/>
    </ligand>
</feature>
<feature type="site" description="Important for activity" evidence="1">
    <location>
        <position position="99"/>
    </location>
</feature>
<dbReference type="EC" id="1.2.1.70" evidence="1"/>
<dbReference type="EMBL" id="CP001186">
    <property type="protein sequence ID" value="ACK97005.1"/>
    <property type="molecule type" value="Genomic_DNA"/>
</dbReference>
<dbReference type="RefSeq" id="WP_000547868.1">
    <property type="nucleotide sequence ID" value="NC_011772.1"/>
</dbReference>
<dbReference type="SMR" id="B7IIX7"/>
<dbReference type="KEGG" id="bcg:BCG9842_B0650"/>
<dbReference type="HOGENOM" id="CLU_035113_2_2_9"/>
<dbReference type="UniPathway" id="UPA00251">
    <property type="reaction ID" value="UER00316"/>
</dbReference>
<dbReference type="Proteomes" id="UP000006744">
    <property type="component" value="Chromosome"/>
</dbReference>
<dbReference type="GO" id="GO:0008883">
    <property type="term" value="F:glutamyl-tRNA reductase activity"/>
    <property type="evidence" value="ECO:0007669"/>
    <property type="project" value="UniProtKB-UniRule"/>
</dbReference>
<dbReference type="GO" id="GO:0050661">
    <property type="term" value="F:NADP binding"/>
    <property type="evidence" value="ECO:0007669"/>
    <property type="project" value="InterPro"/>
</dbReference>
<dbReference type="GO" id="GO:0006782">
    <property type="term" value="P:protoporphyrinogen IX biosynthetic process"/>
    <property type="evidence" value="ECO:0007669"/>
    <property type="project" value="UniProtKB-UniRule"/>
</dbReference>
<dbReference type="CDD" id="cd05213">
    <property type="entry name" value="NAD_bind_Glutamyl_tRNA_reduct"/>
    <property type="match status" value="1"/>
</dbReference>
<dbReference type="FunFam" id="3.30.460.30:FF:000001">
    <property type="entry name" value="Glutamyl-tRNA reductase"/>
    <property type="match status" value="1"/>
</dbReference>
<dbReference type="FunFam" id="3.40.50.720:FF:000031">
    <property type="entry name" value="Glutamyl-tRNA reductase"/>
    <property type="match status" value="1"/>
</dbReference>
<dbReference type="Gene3D" id="3.30.460.30">
    <property type="entry name" value="Glutamyl-tRNA reductase, N-terminal domain"/>
    <property type="match status" value="1"/>
</dbReference>
<dbReference type="Gene3D" id="3.40.50.720">
    <property type="entry name" value="NAD(P)-binding Rossmann-like Domain"/>
    <property type="match status" value="1"/>
</dbReference>
<dbReference type="HAMAP" id="MF_00087">
    <property type="entry name" value="Glu_tRNA_reductase"/>
    <property type="match status" value="1"/>
</dbReference>
<dbReference type="InterPro" id="IPR000343">
    <property type="entry name" value="4pyrrol_synth_GluRdtase"/>
</dbReference>
<dbReference type="InterPro" id="IPR015896">
    <property type="entry name" value="4pyrrol_synth_GluRdtase_dimer"/>
</dbReference>
<dbReference type="InterPro" id="IPR015895">
    <property type="entry name" value="4pyrrol_synth_GluRdtase_N"/>
</dbReference>
<dbReference type="InterPro" id="IPR018214">
    <property type="entry name" value="GluRdtase_CS"/>
</dbReference>
<dbReference type="InterPro" id="IPR036453">
    <property type="entry name" value="GluRdtase_dimer_dom_sf"/>
</dbReference>
<dbReference type="InterPro" id="IPR036343">
    <property type="entry name" value="GluRdtase_N_sf"/>
</dbReference>
<dbReference type="InterPro" id="IPR036291">
    <property type="entry name" value="NAD(P)-bd_dom_sf"/>
</dbReference>
<dbReference type="InterPro" id="IPR006151">
    <property type="entry name" value="Shikm_DH/Glu-tRNA_Rdtase"/>
</dbReference>
<dbReference type="NCBIfam" id="TIGR01035">
    <property type="entry name" value="hemA"/>
    <property type="match status" value="1"/>
</dbReference>
<dbReference type="PANTHER" id="PTHR43120">
    <property type="entry name" value="GLUTAMYL-TRNA REDUCTASE 1, CHLOROPLASTIC"/>
    <property type="match status" value="1"/>
</dbReference>
<dbReference type="PANTHER" id="PTHR43120:SF1">
    <property type="entry name" value="GLUTAMYL-TRNA REDUCTASE 1, CHLOROPLASTIC"/>
    <property type="match status" value="1"/>
</dbReference>
<dbReference type="Pfam" id="PF00745">
    <property type="entry name" value="GlutR_dimer"/>
    <property type="match status" value="1"/>
</dbReference>
<dbReference type="Pfam" id="PF05201">
    <property type="entry name" value="GlutR_N"/>
    <property type="match status" value="1"/>
</dbReference>
<dbReference type="Pfam" id="PF01488">
    <property type="entry name" value="Shikimate_DH"/>
    <property type="match status" value="1"/>
</dbReference>
<dbReference type="PIRSF" id="PIRSF000445">
    <property type="entry name" value="4pyrrol_synth_GluRdtase"/>
    <property type="match status" value="1"/>
</dbReference>
<dbReference type="SUPFAM" id="SSF69742">
    <property type="entry name" value="Glutamyl tRNA-reductase catalytic, N-terminal domain"/>
    <property type="match status" value="1"/>
</dbReference>
<dbReference type="SUPFAM" id="SSF69075">
    <property type="entry name" value="Glutamyl tRNA-reductase dimerization domain"/>
    <property type="match status" value="1"/>
</dbReference>
<dbReference type="SUPFAM" id="SSF51735">
    <property type="entry name" value="NAD(P)-binding Rossmann-fold domains"/>
    <property type="match status" value="1"/>
</dbReference>
<dbReference type="PROSITE" id="PS00747">
    <property type="entry name" value="GLUTR"/>
    <property type="match status" value="1"/>
</dbReference>
<organism>
    <name type="scientific">Bacillus cereus (strain G9842)</name>
    <dbReference type="NCBI Taxonomy" id="405531"/>
    <lineage>
        <taxon>Bacteria</taxon>
        <taxon>Bacillati</taxon>
        <taxon>Bacillota</taxon>
        <taxon>Bacilli</taxon>
        <taxon>Bacillales</taxon>
        <taxon>Bacillaceae</taxon>
        <taxon>Bacillus</taxon>
        <taxon>Bacillus cereus group</taxon>
    </lineage>
</organism>
<comment type="function">
    <text evidence="1">Catalyzes the NADPH-dependent reduction of glutamyl-tRNA(Glu) to glutamate 1-semialdehyde (GSA).</text>
</comment>
<comment type="catalytic activity">
    <reaction evidence="1">
        <text>(S)-4-amino-5-oxopentanoate + tRNA(Glu) + NADP(+) = L-glutamyl-tRNA(Glu) + NADPH + H(+)</text>
        <dbReference type="Rhea" id="RHEA:12344"/>
        <dbReference type="Rhea" id="RHEA-COMP:9663"/>
        <dbReference type="Rhea" id="RHEA-COMP:9680"/>
        <dbReference type="ChEBI" id="CHEBI:15378"/>
        <dbReference type="ChEBI" id="CHEBI:57501"/>
        <dbReference type="ChEBI" id="CHEBI:57783"/>
        <dbReference type="ChEBI" id="CHEBI:58349"/>
        <dbReference type="ChEBI" id="CHEBI:78442"/>
        <dbReference type="ChEBI" id="CHEBI:78520"/>
        <dbReference type="EC" id="1.2.1.70"/>
    </reaction>
</comment>
<comment type="pathway">
    <text evidence="1">Porphyrin-containing compound metabolism; protoporphyrin-IX biosynthesis; 5-aminolevulinate from L-glutamyl-tRNA(Glu): step 1/2.</text>
</comment>
<comment type="subunit">
    <text evidence="1">Homodimer.</text>
</comment>
<comment type="domain">
    <text evidence="1">Possesses an unusual extended V-shaped dimeric structure with each monomer consisting of three distinct domains arranged along a curved 'spinal' alpha-helix. The N-terminal catalytic domain specifically recognizes the glutamate moiety of the substrate. The second domain is the NADPH-binding domain, and the third C-terminal domain is responsible for dimerization.</text>
</comment>
<comment type="miscellaneous">
    <text evidence="1">During catalysis, the active site Cys acts as a nucleophile attacking the alpha-carbonyl group of tRNA-bound glutamate with the formation of a thioester intermediate between enzyme and glutamate, and the concomitant release of tRNA(Glu). The thioester intermediate is finally reduced by direct hydride transfer from NADPH, to form the product GSA.</text>
</comment>
<comment type="similarity">
    <text evidence="1">Belongs to the glutamyl-tRNA reductase family.</text>
</comment>
<sequence>MHILVVSVNYRTAPVEFREKLTFQAAELERAMTTLQNQKSVLENVIVSTCNRTEIYAVVDQLHTGRYYIKKFLADWFQLEIEEVAPYLTIFEQDGAIDHLFRVTCGLDSMVVGETQILGQIKDSFLEAQQVKATGTIFNELFKQVITLAKRAHSETTIGESAMSVSYAAVELGKKIFGELTDCHVLILGAGKMGELALQNLYGSGARKVTVMNRTLSKAEVMAEKYMGHAKSLSELQCALLEADILISSTGASEYVITKEMMTKVEKMRSGRPLFMVDIAVPRDIDPAIDELEGSFLYDIDDLQGVVEANRAERLKEAEKIQFMIEEEIVLFKTWLSTLGVVPLISALRDKALAIQSETMVSLERKIPNLSDREKKVISKHTKSIINQLLKDPILVAKEIAAEEGASEKLALFAKIFDLETEEVESRAEEVEHKRVWTPSVPSL</sequence>
<keyword id="KW-0521">NADP</keyword>
<keyword id="KW-0560">Oxidoreductase</keyword>
<keyword id="KW-0627">Porphyrin biosynthesis</keyword>
<accession>B7IIX7</accession>
<name>HEM1_BACC2</name>
<evidence type="ECO:0000255" key="1">
    <source>
        <dbReference type="HAMAP-Rule" id="MF_00087"/>
    </source>
</evidence>